<gene>
    <name type="primary">rps4</name>
</gene>
<proteinExistence type="inferred from homology"/>
<sequence>MSRYRGPRVKIIRRPGVSPGLTSKTLKSKSNYIDRSTSNKKVSQYRVRLEEKQKLRFHYGLTERQLLKYVRIARKAKGSTGQVLLQLLEMRLDNTIFRLGMAPTIPGARQLVNHGHISMNNNIIDIPSYNREPGDIITIRNKLESRSMISKNINLFQKLKMPSHLSFDLTGLQGSVNQMVNREWVNLKINELLVVEYYSRQV</sequence>
<dbReference type="EMBL" id="AJ269687">
    <property type="protein sequence ID" value="CAC80628.1"/>
    <property type="molecule type" value="Genomic_DNA"/>
</dbReference>
<dbReference type="SMR" id="P59150"/>
<dbReference type="GO" id="GO:0009507">
    <property type="term" value="C:chloroplast"/>
    <property type="evidence" value="ECO:0007669"/>
    <property type="project" value="UniProtKB-SubCell"/>
</dbReference>
<dbReference type="GO" id="GO:0015935">
    <property type="term" value="C:small ribosomal subunit"/>
    <property type="evidence" value="ECO:0007669"/>
    <property type="project" value="InterPro"/>
</dbReference>
<dbReference type="GO" id="GO:0019843">
    <property type="term" value="F:rRNA binding"/>
    <property type="evidence" value="ECO:0007669"/>
    <property type="project" value="UniProtKB-UniRule"/>
</dbReference>
<dbReference type="GO" id="GO:0003735">
    <property type="term" value="F:structural constituent of ribosome"/>
    <property type="evidence" value="ECO:0007669"/>
    <property type="project" value="InterPro"/>
</dbReference>
<dbReference type="GO" id="GO:0042274">
    <property type="term" value="P:ribosomal small subunit biogenesis"/>
    <property type="evidence" value="ECO:0007669"/>
    <property type="project" value="TreeGrafter"/>
</dbReference>
<dbReference type="GO" id="GO:0006412">
    <property type="term" value="P:translation"/>
    <property type="evidence" value="ECO:0007669"/>
    <property type="project" value="UniProtKB-UniRule"/>
</dbReference>
<dbReference type="CDD" id="cd00165">
    <property type="entry name" value="S4"/>
    <property type="match status" value="1"/>
</dbReference>
<dbReference type="FunFam" id="3.10.290.10:FF:000001">
    <property type="entry name" value="30S ribosomal protein S4"/>
    <property type="match status" value="1"/>
</dbReference>
<dbReference type="FunFam" id="1.10.1050.10:FF:000002">
    <property type="entry name" value="30S ribosomal protein S4, chloroplastic"/>
    <property type="match status" value="1"/>
</dbReference>
<dbReference type="Gene3D" id="1.10.1050.10">
    <property type="entry name" value="Ribosomal Protein S4 Delta 41, Chain A, domain 1"/>
    <property type="match status" value="1"/>
</dbReference>
<dbReference type="Gene3D" id="3.10.290.10">
    <property type="entry name" value="RNA-binding S4 domain"/>
    <property type="match status" value="1"/>
</dbReference>
<dbReference type="HAMAP" id="MF_01306_B">
    <property type="entry name" value="Ribosomal_uS4_B"/>
    <property type="match status" value="1"/>
</dbReference>
<dbReference type="InterPro" id="IPR022801">
    <property type="entry name" value="Ribosomal_uS4"/>
</dbReference>
<dbReference type="InterPro" id="IPR005709">
    <property type="entry name" value="Ribosomal_uS4_bac-type"/>
</dbReference>
<dbReference type="InterPro" id="IPR018079">
    <property type="entry name" value="Ribosomal_uS4_CS"/>
</dbReference>
<dbReference type="InterPro" id="IPR001912">
    <property type="entry name" value="Ribosomal_uS4_N"/>
</dbReference>
<dbReference type="InterPro" id="IPR002942">
    <property type="entry name" value="S4_RNA-bd"/>
</dbReference>
<dbReference type="InterPro" id="IPR036986">
    <property type="entry name" value="S4_RNA-bd_sf"/>
</dbReference>
<dbReference type="NCBIfam" id="NF003717">
    <property type="entry name" value="PRK05327.1"/>
    <property type="match status" value="1"/>
</dbReference>
<dbReference type="NCBIfam" id="TIGR01017">
    <property type="entry name" value="rpsD_bact"/>
    <property type="match status" value="1"/>
</dbReference>
<dbReference type="PANTHER" id="PTHR11831">
    <property type="entry name" value="30S 40S RIBOSOMAL PROTEIN"/>
    <property type="match status" value="1"/>
</dbReference>
<dbReference type="PANTHER" id="PTHR11831:SF4">
    <property type="entry name" value="SMALL RIBOSOMAL SUBUNIT PROTEIN US4M"/>
    <property type="match status" value="1"/>
</dbReference>
<dbReference type="Pfam" id="PF00163">
    <property type="entry name" value="Ribosomal_S4"/>
    <property type="match status" value="1"/>
</dbReference>
<dbReference type="Pfam" id="PF01479">
    <property type="entry name" value="S4"/>
    <property type="match status" value="1"/>
</dbReference>
<dbReference type="SMART" id="SM01390">
    <property type="entry name" value="Ribosomal_S4"/>
    <property type="match status" value="1"/>
</dbReference>
<dbReference type="SMART" id="SM00363">
    <property type="entry name" value="S4"/>
    <property type="match status" value="1"/>
</dbReference>
<dbReference type="SUPFAM" id="SSF55174">
    <property type="entry name" value="Alpha-L RNA-binding motif"/>
    <property type="match status" value="1"/>
</dbReference>
<dbReference type="PROSITE" id="PS00632">
    <property type="entry name" value="RIBOSOMAL_S4"/>
    <property type="match status" value="1"/>
</dbReference>
<dbReference type="PROSITE" id="PS50889">
    <property type="entry name" value="S4"/>
    <property type="match status" value="1"/>
</dbReference>
<name>RR4_TAKLE</name>
<geneLocation type="chloroplast"/>
<protein>
    <recommendedName>
        <fullName evidence="3">Small ribosomal subunit protein uS4c</fullName>
    </recommendedName>
    <alternativeName>
        <fullName>30S ribosomal protein S4, chloroplastic</fullName>
    </alternativeName>
</protein>
<reference key="1">
    <citation type="submission" date="1999-09" db="EMBL/GenBank/DDBJ databases">
        <title>A molecular approach to bryophyte systematics.</title>
        <authorList>
            <person name="Capesius I."/>
            <person name="Bloecher R."/>
        </authorList>
    </citation>
    <scope>NUCLEOTIDE SEQUENCE [GENOMIC DNA]</scope>
    <source>
        <tissue>Gametophyte</tissue>
    </source>
</reference>
<keyword id="KW-0150">Chloroplast</keyword>
<keyword id="KW-0934">Plastid</keyword>
<keyword id="KW-0687">Ribonucleoprotein</keyword>
<keyword id="KW-0689">Ribosomal protein</keyword>
<keyword id="KW-0694">RNA-binding</keyword>
<keyword id="KW-0699">rRNA-binding</keyword>
<comment type="function">
    <text evidence="1">One of the primary rRNA binding proteins, it binds directly to 16S rRNA where it nucleates assembly of the body of the 30S subunit.</text>
</comment>
<comment type="function">
    <text evidence="1">With S5 and S12 plays an important role in translational accuracy.</text>
</comment>
<comment type="subunit">
    <text evidence="1">Part of the 30S ribosomal subunit. Contacts protein S5. The interaction surface between S4 and S5 is involved in control of translational fidelity (By similarity).</text>
</comment>
<comment type="subcellular location">
    <subcellularLocation>
        <location>Plastid</location>
        <location>Chloroplast</location>
    </subcellularLocation>
</comment>
<comment type="similarity">
    <text evidence="3">Belongs to the universal ribosomal protein uS4 family.</text>
</comment>
<accession>P59150</accession>
<feature type="chain" id="PRO_0000132672" description="Small ribosomal subunit protein uS4c">
    <location>
        <begin position="1"/>
        <end position="202"/>
    </location>
</feature>
<feature type="domain" description="S4 RNA-binding">
    <location>
        <begin position="90"/>
        <end position="153"/>
    </location>
</feature>
<feature type="region of interest" description="Disordered" evidence="2">
    <location>
        <begin position="13"/>
        <end position="37"/>
    </location>
</feature>
<feature type="compositionally biased region" description="Polar residues" evidence="2">
    <location>
        <begin position="20"/>
        <end position="37"/>
    </location>
</feature>
<evidence type="ECO:0000250" key="1"/>
<evidence type="ECO:0000256" key="2">
    <source>
        <dbReference type="SAM" id="MobiDB-lite"/>
    </source>
</evidence>
<evidence type="ECO:0000305" key="3"/>
<organism>
    <name type="scientific">Takakia lepidozioides</name>
    <name type="common">Moss</name>
    <dbReference type="NCBI Taxonomy" id="37425"/>
    <lineage>
        <taxon>Eukaryota</taxon>
        <taxon>Viridiplantae</taxon>
        <taxon>Streptophyta</taxon>
        <taxon>Embryophyta</taxon>
        <taxon>Bryophyta</taxon>
        <taxon>Takakiophytina</taxon>
        <taxon>Takakiopsida</taxon>
        <taxon>Takakiales</taxon>
        <taxon>Takakiaceae</taxon>
        <taxon>Takakia</taxon>
    </lineage>
</organism>